<dbReference type="EMBL" id="AE014134">
    <property type="protein sequence ID" value="AAF53069.1"/>
    <property type="molecule type" value="Genomic_DNA"/>
</dbReference>
<dbReference type="EMBL" id="AY058523">
    <property type="protein sequence ID" value="AAL13752.1"/>
    <property type="molecule type" value="mRNA"/>
</dbReference>
<dbReference type="RefSeq" id="NP_609488.1">
    <property type="nucleotide sequence ID" value="NM_135644.4"/>
</dbReference>
<dbReference type="PDB" id="5VNY">
    <property type="method" value="X-ray"/>
    <property type="resolution" value="1.10 A"/>
    <property type="chains" value="A=359-423"/>
</dbReference>
<dbReference type="PDB" id="5VO5">
    <property type="method" value="X-ray"/>
    <property type="resolution" value="2.00 A"/>
    <property type="chains" value="A=359-423"/>
</dbReference>
<dbReference type="PDB" id="6EI6">
    <property type="method" value="X-ray"/>
    <property type="resolution" value="2.46 A"/>
    <property type="chains" value="A/B=550-816"/>
</dbReference>
<dbReference type="PDB" id="7ZRV">
    <property type="method" value="EM"/>
    <property type="resolution" value="2.80 A"/>
    <property type="chains" value="E/F=356-423"/>
</dbReference>
<dbReference type="PDB" id="7ZSD">
    <property type="method" value="EM"/>
    <property type="resolution" value="3.29 A"/>
    <property type="chains" value="P=359-423"/>
</dbReference>
<dbReference type="PDB" id="7ZSS">
    <property type="method" value="EM"/>
    <property type="resolution" value="2.63 A"/>
    <property type="chains" value="D/P/h=359-423"/>
</dbReference>
<dbReference type="PDBsum" id="5VNY"/>
<dbReference type="PDBsum" id="5VO5"/>
<dbReference type="PDBsum" id="6EI6"/>
<dbReference type="PDBsum" id="7ZRV"/>
<dbReference type="PDBsum" id="7ZSD"/>
<dbReference type="PDBsum" id="7ZSS"/>
<dbReference type="EMDB" id="EMD-14947"/>
<dbReference type="SMR" id="Q9VKJ9"/>
<dbReference type="BioGRID" id="60605">
    <property type="interactions" value="16"/>
</dbReference>
<dbReference type="FunCoup" id="Q9VKJ9">
    <property type="interactions" value="1241"/>
</dbReference>
<dbReference type="IntAct" id="Q9VKJ9">
    <property type="interactions" value="13"/>
</dbReference>
<dbReference type="STRING" id="7227.FBpp0297275"/>
<dbReference type="GlyGen" id="Q9VKJ9">
    <property type="glycosylation" value="7 sites"/>
</dbReference>
<dbReference type="PaxDb" id="7227-FBpp0297275"/>
<dbReference type="DNASU" id="34543"/>
<dbReference type="EnsemblMetazoa" id="FBtr0080197">
    <property type="protein sequence ID" value="FBpp0079786"/>
    <property type="gene ID" value="FBgn0261983"/>
</dbReference>
<dbReference type="GeneID" id="34543"/>
<dbReference type="KEGG" id="dme:Dmel_CG4713"/>
<dbReference type="AGR" id="FB:FBgn0261983"/>
<dbReference type="FlyBase" id="FBgn0261983">
    <property type="gene designation" value="l(2)gd1"/>
</dbReference>
<dbReference type="VEuPathDB" id="VectorBase:FBgn0261983"/>
<dbReference type="eggNOG" id="KOG3837">
    <property type="taxonomic scope" value="Eukaryota"/>
</dbReference>
<dbReference type="GeneTree" id="ENSGT00390000009595"/>
<dbReference type="InParanoid" id="Q9VKJ9"/>
<dbReference type="OrthoDB" id="19996at2759"/>
<dbReference type="PhylomeDB" id="Q9VKJ9"/>
<dbReference type="Reactome" id="R-DME-9668328">
    <property type="pathway name" value="Sealing of the nuclear envelope (NE) by ESCRT-III"/>
</dbReference>
<dbReference type="BioGRID-ORCS" id="34543">
    <property type="hits" value="0 hits in 3 CRISPR screens"/>
</dbReference>
<dbReference type="GenomeRNAi" id="34543"/>
<dbReference type="PRO" id="PR:Q9VKJ9"/>
<dbReference type="Proteomes" id="UP000000803">
    <property type="component" value="Chromosome 2L"/>
</dbReference>
<dbReference type="Bgee" id="FBgn0261983">
    <property type="expression patterns" value="Expressed in embryonic/larval hemocyte (Drosophila) and 96 other cell types or tissues"/>
</dbReference>
<dbReference type="ExpressionAtlas" id="Q9VKJ9">
    <property type="expression patterns" value="baseline and differential"/>
</dbReference>
<dbReference type="GO" id="GO:0016327">
    <property type="term" value="C:apicolateral plasma membrane"/>
    <property type="evidence" value="ECO:0007669"/>
    <property type="project" value="UniProtKB-SubCell"/>
</dbReference>
<dbReference type="GO" id="GO:0005938">
    <property type="term" value="C:cell cortex"/>
    <property type="evidence" value="ECO:0007669"/>
    <property type="project" value="UniProtKB-SubCell"/>
</dbReference>
<dbReference type="GO" id="GO:0005737">
    <property type="term" value="C:cytoplasm"/>
    <property type="evidence" value="ECO:0000314"/>
    <property type="project" value="FlyBase"/>
</dbReference>
<dbReference type="GO" id="GO:0098592">
    <property type="term" value="C:cytoplasmic side of apical plasma membrane"/>
    <property type="evidence" value="ECO:0000314"/>
    <property type="project" value="FlyBase"/>
</dbReference>
<dbReference type="GO" id="GO:0005829">
    <property type="term" value="C:cytosol"/>
    <property type="evidence" value="ECO:0007669"/>
    <property type="project" value="UniProtKB-SubCell"/>
</dbReference>
<dbReference type="GO" id="GO:0010008">
    <property type="term" value="C:endosome membrane"/>
    <property type="evidence" value="ECO:0000314"/>
    <property type="project" value="UniProtKB"/>
</dbReference>
<dbReference type="GO" id="GO:0005634">
    <property type="term" value="C:nucleus"/>
    <property type="evidence" value="ECO:0000318"/>
    <property type="project" value="GO_Central"/>
</dbReference>
<dbReference type="GO" id="GO:0000981">
    <property type="term" value="F:DNA-binding transcription factor activity, RNA polymerase II-specific"/>
    <property type="evidence" value="ECO:0000318"/>
    <property type="project" value="GO_Central"/>
</dbReference>
<dbReference type="GO" id="GO:0001227">
    <property type="term" value="F:DNA-binding transcription repressor activity, RNA polymerase II-specific"/>
    <property type="evidence" value="ECO:0007669"/>
    <property type="project" value="InterPro"/>
</dbReference>
<dbReference type="GO" id="GO:1901981">
    <property type="term" value="F:phosphatidylinositol phosphate binding"/>
    <property type="evidence" value="ECO:0000314"/>
    <property type="project" value="FlyBase"/>
</dbReference>
<dbReference type="GO" id="GO:0000978">
    <property type="term" value="F:RNA polymerase II cis-regulatory region sequence-specific DNA binding"/>
    <property type="evidence" value="ECO:0000318"/>
    <property type="project" value="GO_Central"/>
</dbReference>
<dbReference type="GO" id="GO:0048749">
    <property type="term" value="P:compound eye development"/>
    <property type="evidence" value="ECO:0000315"/>
    <property type="project" value="FlyBase"/>
</dbReference>
<dbReference type="GO" id="GO:0016197">
    <property type="term" value="P:endosomal transport"/>
    <property type="evidence" value="ECO:0000315"/>
    <property type="project" value="FlyBase"/>
</dbReference>
<dbReference type="GO" id="GO:0032509">
    <property type="term" value="P:endosome transport via multivesicular body sorting pathway"/>
    <property type="evidence" value="ECO:0000315"/>
    <property type="project" value="UniProtKB"/>
</dbReference>
<dbReference type="GO" id="GO:0048132">
    <property type="term" value="P:female germ-line stem cell asymmetric division"/>
    <property type="evidence" value="ECO:0000315"/>
    <property type="project" value="FlyBase"/>
</dbReference>
<dbReference type="GO" id="GO:0008586">
    <property type="term" value="P:imaginal disc-derived wing vein morphogenesis"/>
    <property type="evidence" value="ECO:0000315"/>
    <property type="project" value="FlyBase"/>
</dbReference>
<dbReference type="GO" id="GO:0006886">
    <property type="term" value="P:intracellular protein transport"/>
    <property type="evidence" value="ECO:0000315"/>
    <property type="project" value="FlyBase"/>
</dbReference>
<dbReference type="GO" id="GO:0000281">
    <property type="term" value="P:mitotic cytokinesis"/>
    <property type="evidence" value="ECO:0000315"/>
    <property type="project" value="FlyBase"/>
</dbReference>
<dbReference type="GO" id="GO:0045746">
    <property type="term" value="P:negative regulation of Notch signaling pathway"/>
    <property type="evidence" value="ECO:0000315"/>
    <property type="project" value="UniProtKB"/>
</dbReference>
<dbReference type="GO" id="GO:0007219">
    <property type="term" value="P:Notch signaling pathway"/>
    <property type="evidence" value="ECO:0007669"/>
    <property type="project" value="UniProtKB-KW"/>
</dbReference>
<dbReference type="GO" id="GO:1905367">
    <property type="term" value="P:positive regulation of intralumenal vesicle formation"/>
    <property type="evidence" value="ECO:0000315"/>
    <property type="project" value="UniProtKB"/>
</dbReference>
<dbReference type="GO" id="GO:0006357">
    <property type="term" value="P:regulation of transcription by RNA polymerase II"/>
    <property type="evidence" value="ECO:0000318"/>
    <property type="project" value="GO_Central"/>
</dbReference>
<dbReference type="GO" id="GO:0007423">
    <property type="term" value="P:sensory organ development"/>
    <property type="evidence" value="ECO:0000315"/>
    <property type="project" value="FlyBase"/>
</dbReference>
<dbReference type="GO" id="GO:0045035">
    <property type="term" value="P:sensory organ precursor cell division"/>
    <property type="evidence" value="ECO:0000315"/>
    <property type="project" value="FlyBase"/>
</dbReference>
<dbReference type="GO" id="GO:0007472">
    <property type="term" value="P:wing disc morphogenesis"/>
    <property type="evidence" value="ECO:0000315"/>
    <property type="project" value="FlyBase"/>
</dbReference>
<dbReference type="CDD" id="cd08690">
    <property type="entry name" value="C2_Freud-1"/>
    <property type="match status" value="1"/>
</dbReference>
<dbReference type="FunFam" id="2.60.40.150:FF:000255">
    <property type="entry name" value="Uncharacterized protein, isoform A"/>
    <property type="match status" value="1"/>
</dbReference>
<dbReference type="Gene3D" id="2.60.40.150">
    <property type="entry name" value="C2 domain"/>
    <property type="match status" value="1"/>
</dbReference>
<dbReference type="InterPro" id="IPR000008">
    <property type="entry name" value="C2_dom"/>
</dbReference>
<dbReference type="InterPro" id="IPR035892">
    <property type="entry name" value="C2_domain_sf"/>
</dbReference>
<dbReference type="InterPro" id="IPR037772">
    <property type="entry name" value="C2_Freud"/>
</dbReference>
<dbReference type="InterPro" id="IPR039725">
    <property type="entry name" value="CC2D1A/B"/>
</dbReference>
<dbReference type="InterPro" id="IPR006608">
    <property type="entry name" value="CC2D1A/B_DM14"/>
</dbReference>
<dbReference type="PANTHER" id="PTHR13076">
    <property type="entry name" value="COILED-COIL AND C2 DOMAIN-CONTAINING PROTEIN 1-LIKE"/>
    <property type="match status" value="1"/>
</dbReference>
<dbReference type="PANTHER" id="PTHR13076:SF9">
    <property type="entry name" value="COILED-COIL AND C2 DOMAIN-CONTAINING PROTEIN 1-LIKE"/>
    <property type="match status" value="1"/>
</dbReference>
<dbReference type="Pfam" id="PF00168">
    <property type="entry name" value="C2"/>
    <property type="match status" value="1"/>
</dbReference>
<dbReference type="Pfam" id="PF21528">
    <property type="entry name" value="CC2D1A-B_DM14"/>
    <property type="match status" value="4"/>
</dbReference>
<dbReference type="SMART" id="SM00239">
    <property type="entry name" value="C2"/>
    <property type="match status" value="1"/>
</dbReference>
<dbReference type="SMART" id="SM00685">
    <property type="entry name" value="DM14"/>
    <property type="match status" value="4"/>
</dbReference>
<dbReference type="SUPFAM" id="SSF49562">
    <property type="entry name" value="C2 domain (Calcium/lipid-binding domain, CaLB)"/>
    <property type="match status" value="1"/>
</dbReference>
<dbReference type="PROSITE" id="PS50004">
    <property type="entry name" value="C2"/>
    <property type="match status" value="1"/>
</dbReference>
<protein>
    <recommendedName>
        <fullName evidence="16">Coiled-coil and C2 domain-containing protein 1-like</fullName>
    </recommendedName>
    <alternativeName>
        <fullName evidence="16">Lethal (2) giant discs 1 protein</fullName>
    </alternativeName>
</protein>
<feature type="chain" id="PRO_0000288430" description="Coiled-coil and C2 domain-containing protein 1-like">
    <location>
        <begin position="1"/>
        <end position="816"/>
    </location>
</feature>
<feature type="domain" description="C2" evidence="2">
    <location>
        <begin position="637"/>
        <end position="776"/>
    </location>
</feature>
<feature type="region of interest" description="Disordered" evidence="3">
    <location>
        <begin position="1"/>
        <end position="135"/>
    </location>
</feature>
<feature type="region of interest" description="DM14 1" evidence="17">
    <location>
        <begin position="145"/>
        <end position="200"/>
    </location>
</feature>
<feature type="region of interest" description="Disordered" evidence="3">
    <location>
        <begin position="157"/>
        <end position="176"/>
    </location>
</feature>
<feature type="region of interest" description="Disordered" evidence="3">
    <location>
        <begin position="186"/>
        <end position="269"/>
    </location>
</feature>
<feature type="region of interest" description="DM14 2" evidence="17">
    <location>
        <begin position="265"/>
        <end position="317"/>
    </location>
</feature>
<feature type="region of interest" description="DM14 3" evidence="17">
    <location>
        <begin position="365"/>
        <end position="419"/>
    </location>
</feature>
<feature type="region of interest" description="Disordered" evidence="3">
    <location>
        <begin position="418"/>
        <end position="492"/>
    </location>
</feature>
<feature type="region of interest" description="DM14 4" evidence="17">
    <location>
        <begin position="502"/>
        <end position="556"/>
    </location>
</feature>
<feature type="coiled-coil region" evidence="1">
    <location>
        <begin position="355"/>
        <end position="382"/>
    </location>
</feature>
<feature type="compositionally biased region" description="Basic and acidic residues" evidence="3">
    <location>
        <begin position="1"/>
        <end position="11"/>
    </location>
</feature>
<feature type="compositionally biased region" description="Acidic residues" evidence="3">
    <location>
        <begin position="25"/>
        <end position="47"/>
    </location>
</feature>
<feature type="compositionally biased region" description="Basic and acidic residues" evidence="3">
    <location>
        <begin position="73"/>
        <end position="85"/>
    </location>
</feature>
<feature type="compositionally biased region" description="Acidic residues" evidence="3">
    <location>
        <begin position="86"/>
        <end position="100"/>
    </location>
</feature>
<feature type="compositionally biased region" description="Low complexity" evidence="3">
    <location>
        <begin position="122"/>
        <end position="131"/>
    </location>
</feature>
<feature type="compositionally biased region" description="Pro residues" evidence="3">
    <location>
        <begin position="220"/>
        <end position="243"/>
    </location>
</feature>
<feature type="compositionally biased region" description="Low complexity" evidence="3">
    <location>
        <begin position="424"/>
        <end position="433"/>
    </location>
</feature>
<feature type="compositionally biased region" description="Pro residues" evidence="3">
    <location>
        <begin position="434"/>
        <end position="449"/>
    </location>
</feature>
<feature type="compositionally biased region" description="Low complexity" evidence="3">
    <location>
        <begin position="450"/>
        <end position="471"/>
    </location>
</feature>
<feature type="compositionally biased region" description="Polar residues" evidence="3">
    <location>
        <begin position="483"/>
        <end position="492"/>
    </location>
</feature>
<feature type="mutagenesis site" description="No loss of phosphatidyl inositol monophosphate binding." evidence="5">
    <location>
        <begin position="1"/>
        <end position="580"/>
    </location>
</feature>
<feature type="mutagenesis site" description="Loss of function, probably due to disruption of electrostatic interaction with shrb; when associated with E-393." evidence="13">
    <original>R</original>
    <variation>E</variation>
    <location>
        <position position="173"/>
    </location>
</feature>
<feature type="mutagenesis site" description="Loss of function, probably due to disruption of electrostatic interaction with shrb; when associated with E-173." evidence="13">
    <original>R</original>
    <variation>E</variation>
    <location>
        <position position="393"/>
    </location>
</feature>
<feature type="mutagenesis site" description="In lgd24; defective differentiation of sensory organ precursor cells." evidence="5">
    <original>P</original>
    <variation>S</variation>
    <location>
        <position position="557"/>
    </location>
</feature>
<feature type="mutagenesis site" description="In lgd08; loss of membrane association. Defective differentiation of sensory organ precursor cells." evidence="5">
    <location>
        <begin position="595"/>
        <end position="816"/>
    </location>
</feature>
<feature type="mutagenesis site" description="Dramatic reduction of phosphatidyl inositol monophosphate binding." evidence="5">
    <location>
        <begin position="665"/>
        <end position="816"/>
    </location>
</feature>
<feature type="helix" evidence="23">
    <location>
        <begin position="361"/>
        <end position="380"/>
    </location>
</feature>
<feature type="turn" evidence="23">
    <location>
        <begin position="381"/>
        <end position="383"/>
    </location>
</feature>
<feature type="helix" evidence="23">
    <location>
        <begin position="385"/>
        <end position="406"/>
    </location>
</feature>
<feature type="helix" evidence="23">
    <location>
        <begin position="413"/>
        <end position="415"/>
    </location>
</feature>
<feature type="helix" evidence="24">
    <location>
        <begin position="580"/>
        <end position="608"/>
    </location>
</feature>
<feature type="helix" evidence="24">
    <location>
        <begin position="612"/>
        <end position="637"/>
    </location>
</feature>
<feature type="strand" evidence="24">
    <location>
        <begin position="645"/>
        <end position="648"/>
    </location>
</feature>
<feature type="helix" evidence="24">
    <location>
        <begin position="654"/>
        <end position="656"/>
    </location>
</feature>
<feature type="strand" evidence="24">
    <location>
        <begin position="665"/>
        <end position="674"/>
    </location>
</feature>
<feature type="strand" evidence="24">
    <location>
        <begin position="686"/>
        <end position="691"/>
    </location>
</feature>
<feature type="strand" evidence="24">
    <location>
        <begin position="695"/>
        <end position="697"/>
    </location>
</feature>
<feature type="strand" evidence="24">
    <location>
        <begin position="701"/>
        <end position="703"/>
    </location>
</feature>
<feature type="strand" evidence="24">
    <location>
        <begin position="717"/>
        <end position="722"/>
    </location>
</feature>
<feature type="helix" evidence="24">
    <location>
        <begin position="728"/>
        <end position="736"/>
    </location>
</feature>
<feature type="strand" evidence="24">
    <location>
        <begin position="738"/>
        <end position="745"/>
    </location>
</feature>
<feature type="strand" evidence="24">
    <location>
        <begin position="754"/>
        <end position="763"/>
    </location>
</feature>
<feature type="helix" evidence="24">
    <location>
        <begin position="764"/>
        <end position="767"/>
    </location>
</feature>
<feature type="strand" evidence="24">
    <location>
        <begin position="770"/>
        <end position="797"/>
    </location>
</feature>
<feature type="helix" evidence="24">
    <location>
        <begin position="801"/>
        <end position="809"/>
    </location>
</feature>
<feature type="strand" evidence="24">
    <location>
        <begin position="811"/>
        <end position="814"/>
    </location>
</feature>
<evidence type="ECO:0000255" key="1"/>
<evidence type="ECO:0000255" key="2">
    <source>
        <dbReference type="PROSITE-ProRule" id="PRU00041"/>
    </source>
</evidence>
<evidence type="ECO:0000256" key="3">
    <source>
        <dbReference type="SAM" id="MobiDB-lite"/>
    </source>
</evidence>
<evidence type="ECO:0000269" key="4">
    <source>
    </source>
</evidence>
<evidence type="ECO:0000269" key="5">
    <source>
    </source>
</evidence>
<evidence type="ECO:0000269" key="6">
    <source>
    </source>
</evidence>
<evidence type="ECO:0000269" key="7">
    <source>
    </source>
</evidence>
<evidence type="ECO:0000269" key="8">
    <source>
    </source>
</evidence>
<evidence type="ECO:0000269" key="9">
    <source>
    </source>
</evidence>
<evidence type="ECO:0000269" key="10">
    <source>
    </source>
</evidence>
<evidence type="ECO:0000269" key="11">
    <source>
    </source>
</evidence>
<evidence type="ECO:0000269" key="12">
    <source>
    </source>
</evidence>
<evidence type="ECO:0000269" key="13">
    <source>
    </source>
</evidence>
<evidence type="ECO:0000269" key="14">
    <source>
    </source>
</evidence>
<evidence type="ECO:0000303" key="15">
    <source>
    </source>
</evidence>
<evidence type="ECO:0000305" key="16"/>
<evidence type="ECO:0000305" key="17">
    <source>
    </source>
</evidence>
<evidence type="ECO:0000305" key="18">
    <source>
    </source>
</evidence>
<evidence type="ECO:0000312" key="19">
    <source>
        <dbReference type="FlyBase" id="FBgn0261983"/>
    </source>
</evidence>
<evidence type="ECO:0007744" key="20">
    <source>
        <dbReference type="PDB" id="5VNY"/>
    </source>
</evidence>
<evidence type="ECO:0007744" key="21">
    <source>
        <dbReference type="PDB" id="5VO5"/>
    </source>
</evidence>
<evidence type="ECO:0007744" key="22">
    <source>
        <dbReference type="PDB" id="6EI6"/>
    </source>
</evidence>
<evidence type="ECO:0007829" key="23">
    <source>
        <dbReference type="PDB" id="5VNY"/>
    </source>
</evidence>
<evidence type="ECO:0007829" key="24">
    <source>
        <dbReference type="PDB" id="6EI6"/>
    </source>
</evidence>
<gene>
    <name evidence="19" type="primary">l(2)gd1</name>
    <name evidence="15 19" type="synonym">lgd</name>
    <name evidence="19" type="ORF">CG4713</name>
</gene>
<name>C2D1_DROME</name>
<organism>
    <name type="scientific">Drosophila melanogaster</name>
    <name type="common">Fruit fly</name>
    <dbReference type="NCBI Taxonomy" id="7227"/>
    <lineage>
        <taxon>Eukaryota</taxon>
        <taxon>Metazoa</taxon>
        <taxon>Ecdysozoa</taxon>
        <taxon>Arthropoda</taxon>
        <taxon>Hexapoda</taxon>
        <taxon>Insecta</taxon>
        <taxon>Pterygota</taxon>
        <taxon>Neoptera</taxon>
        <taxon>Endopterygota</taxon>
        <taxon>Diptera</taxon>
        <taxon>Brachycera</taxon>
        <taxon>Muscomorpha</taxon>
        <taxon>Ephydroidea</taxon>
        <taxon>Drosophilidae</taxon>
        <taxon>Drosophila</taxon>
        <taxon>Sophophora</taxon>
    </lineage>
</organism>
<proteinExistence type="evidence at protein level"/>
<reference key="1">
    <citation type="journal article" date="2000" name="Science">
        <title>The genome sequence of Drosophila melanogaster.</title>
        <authorList>
            <person name="Adams M.D."/>
            <person name="Celniker S.E."/>
            <person name="Holt R.A."/>
            <person name="Evans C.A."/>
            <person name="Gocayne J.D."/>
            <person name="Amanatides P.G."/>
            <person name="Scherer S.E."/>
            <person name="Li P.W."/>
            <person name="Hoskins R.A."/>
            <person name="Galle R.F."/>
            <person name="George R.A."/>
            <person name="Lewis S.E."/>
            <person name="Richards S."/>
            <person name="Ashburner M."/>
            <person name="Henderson S.N."/>
            <person name="Sutton G.G."/>
            <person name="Wortman J.R."/>
            <person name="Yandell M.D."/>
            <person name="Zhang Q."/>
            <person name="Chen L.X."/>
            <person name="Brandon R.C."/>
            <person name="Rogers Y.-H.C."/>
            <person name="Blazej R.G."/>
            <person name="Champe M."/>
            <person name="Pfeiffer B.D."/>
            <person name="Wan K.H."/>
            <person name="Doyle C."/>
            <person name="Baxter E.G."/>
            <person name="Helt G."/>
            <person name="Nelson C.R."/>
            <person name="Miklos G.L.G."/>
            <person name="Abril J.F."/>
            <person name="Agbayani A."/>
            <person name="An H.-J."/>
            <person name="Andrews-Pfannkoch C."/>
            <person name="Baldwin D."/>
            <person name="Ballew R.M."/>
            <person name="Basu A."/>
            <person name="Baxendale J."/>
            <person name="Bayraktaroglu L."/>
            <person name="Beasley E.M."/>
            <person name="Beeson K.Y."/>
            <person name="Benos P.V."/>
            <person name="Berman B.P."/>
            <person name="Bhandari D."/>
            <person name="Bolshakov S."/>
            <person name="Borkova D."/>
            <person name="Botchan M.R."/>
            <person name="Bouck J."/>
            <person name="Brokstein P."/>
            <person name="Brottier P."/>
            <person name="Burtis K.C."/>
            <person name="Busam D.A."/>
            <person name="Butler H."/>
            <person name="Cadieu E."/>
            <person name="Center A."/>
            <person name="Chandra I."/>
            <person name="Cherry J.M."/>
            <person name="Cawley S."/>
            <person name="Dahlke C."/>
            <person name="Davenport L.B."/>
            <person name="Davies P."/>
            <person name="de Pablos B."/>
            <person name="Delcher A."/>
            <person name="Deng Z."/>
            <person name="Mays A.D."/>
            <person name="Dew I."/>
            <person name="Dietz S.M."/>
            <person name="Dodson K."/>
            <person name="Doup L.E."/>
            <person name="Downes M."/>
            <person name="Dugan-Rocha S."/>
            <person name="Dunkov B.C."/>
            <person name="Dunn P."/>
            <person name="Durbin K.J."/>
            <person name="Evangelista C.C."/>
            <person name="Ferraz C."/>
            <person name="Ferriera S."/>
            <person name="Fleischmann W."/>
            <person name="Fosler C."/>
            <person name="Gabrielian A.E."/>
            <person name="Garg N.S."/>
            <person name="Gelbart W.M."/>
            <person name="Glasser K."/>
            <person name="Glodek A."/>
            <person name="Gong F."/>
            <person name="Gorrell J.H."/>
            <person name="Gu Z."/>
            <person name="Guan P."/>
            <person name="Harris M."/>
            <person name="Harris N.L."/>
            <person name="Harvey D.A."/>
            <person name="Heiman T.J."/>
            <person name="Hernandez J.R."/>
            <person name="Houck J."/>
            <person name="Hostin D."/>
            <person name="Houston K.A."/>
            <person name="Howland T.J."/>
            <person name="Wei M.-H."/>
            <person name="Ibegwam C."/>
            <person name="Jalali M."/>
            <person name="Kalush F."/>
            <person name="Karpen G.H."/>
            <person name="Ke Z."/>
            <person name="Kennison J.A."/>
            <person name="Ketchum K.A."/>
            <person name="Kimmel B.E."/>
            <person name="Kodira C.D."/>
            <person name="Kraft C.L."/>
            <person name="Kravitz S."/>
            <person name="Kulp D."/>
            <person name="Lai Z."/>
            <person name="Lasko P."/>
            <person name="Lei Y."/>
            <person name="Levitsky A.A."/>
            <person name="Li J.H."/>
            <person name="Li Z."/>
            <person name="Liang Y."/>
            <person name="Lin X."/>
            <person name="Liu X."/>
            <person name="Mattei B."/>
            <person name="McIntosh T.C."/>
            <person name="McLeod M.P."/>
            <person name="McPherson D."/>
            <person name="Merkulov G."/>
            <person name="Milshina N.V."/>
            <person name="Mobarry C."/>
            <person name="Morris J."/>
            <person name="Moshrefi A."/>
            <person name="Mount S.M."/>
            <person name="Moy M."/>
            <person name="Murphy B."/>
            <person name="Murphy L."/>
            <person name="Muzny D.M."/>
            <person name="Nelson D.L."/>
            <person name="Nelson D.R."/>
            <person name="Nelson K.A."/>
            <person name="Nixon K."/>
            <person name="Nusskern D.R."/>
            <person name="Pacleb J.M."/>
            <person name="Palazzolo M."/>
            <person name="Pittman G.S."/>
            <person name="Pan S."/>
            <person name="Pollard J."/>
            <person name="Puri V."/>
            <person name="Reese M.G."/>
            <person name="Reinert K."/>
            <person name="Remington K."/>
            <person name="Saunders R.D.C."/>
            <person name="Scheeler F."/>
            <person name="Shen H."/>
            <person name="Shue B.C."/>
            <person name="Siden-Kiamos I."/>
            <person name="Simpson M."/>
            <person name="Skupski M.P."/>
            <person name="Smith T.J."/>
            <person name="Spier E."/>
            <person name="Spradling A.C."/>
            <person name="Stapleton M."/>
            <person name="Strong R."/>
            <person name="Sun E."/>
            <person name="Svirskas R."/>
            <person name="Tector C."/>
            <person name="Turner R."/>
            <person name="Venter E."/>
            <person name="Wang A.H."/>
            <person name="Wang X."/>
            <person name="Wang Z.-Y."/>
            <person name="Wassarman D.A."/>
            <person name="Weinstock G.M."/>
            <person name="Weissenbach J."/>
            <person name="Williams S.M."/>
            <person name="Woodage T."/>
            <person name="Worley K.C."/>
            <person name="Wu D."/>
            <person name="Yang S."/>
            <person name="Yao Q.A."/>
            <person name="Ye J."/>
            <person name="Yeh R.-F."/>
            <person name="Zaveri J.S."/>
            <person name="Zhan M."/>
            <person name="Zhang G."/>
            <person name="Zhao Q."/>
            <person name="Zheng L."/>
            <person name="Zheng X.H."/>
            <person name="Zhong F.N."/>
            <person name="Zhong W."/>
            <person name="Zhou X."/>
            <person name="Zhu S.C."/>
            <person name="Zhu X."/>
            <person name="Smith H.O."/>
            <person name="Gibbs R.A."/>
            <person name="Myers E.W."/>
            <person name="Rubin G.M."/>
            <person name="Venter J.C."/>
        </authorList>
    </citation>
    <scope>NUCLEOTIDE SEQUENCE [LARGE SCALE GENOMIC DNA]</scope>
    <source>
        <strain>Berkeley</strain>
    </source>
</reference>
<reference key="2">
    <citation type="journal article" date="2002" name="Genome Biol.">
        <title>Annotation of the Drosophila melanogaster euchromatic genome: a systematic review.</title>
        <authorList>
            <person name="Misra S."/>
            <person name="Crosby M.A."/>
            <person name="Mungall C.J."/>
            <person name="Matthews B.B."/>
            <person name="Campbell K.S."/>
            <person name="Hradecky P."/>
            <person name="Huang Y."/>
            <person name="Kaminker J.S."/>
            <person name="Millburn G.H."/>
            <person name="Prochnik S.E."/>
            <person name="Smith C.D."/>
            <person name="Tupy J.L."/>
            <person name="Whitfield E.J."/>
            <person name="Bayraktaroglu L."/>
            <person name="Berman B.P."/>
            <person name="Bettencourt B.R."/>
            <person name="Celniker S.E."/>
            <person name="de Grey A.D.N.J."/>
            <person name="Drysdale R.A."/>
            <person name="Harris N.L."/>
            <person name="Richter J."/>
            <person name="Russo S."/>
            <person name="Schroeder A.J."/>
            <person name="Shu S.Q."/>
            <person name="Stapleton M."/>
            <person name="Yamada C."/>
            <person name="Ashburner M."/>
            <person name="Gelbart W.M."/>
            <person name="Rubin G.M."/>
            <person name="Lewis S.E."/>
        </authorList>
    </citation>
    <scope>GENOME REANNOTATION</scope>
    <source>
        <strain>Berkeley</strain>
    </source>
</reference>
<reference key="3">
    <citation type="journal article" date="2002" name="Genome Biol.">
        <title>A Drosophila full-length cDNA resource.</title>
        <authorList>
            <person name="Stapleton M."/>
            <person name="Carlson J.W."/>
            <person name="Brokstein P."/>
            <person name="Yu C."/>
            <person name="Champe M."/>
            <person name="George R.A."/>
            <person name="Guarin H."/>
            <person name="Kronmiller B."/>
            <person name="Pacleb J.M."/>
            <person name="Park S."/>
            <person name="Wan K.H."/>
            <person name="Rubin G.M."/>
            <person name="Celniker S.E."/>
        </authorList>
    </citation>
    <scope>NUCLEOTIDE SEQUENCE [LARGE SCALE MRNA]</scope>
    <source>
        <strain>Berkeley</strain>
        <tissue>Embryo</tissue>
    </source>
</reference>
<reference key="4">
    <citation type="journal article" date="2003" name="Dev. Biol.">
        <title>The tumour suppressor gene l(2)giant discs is required to restrict the activity of Notch to the dorsoventral boundary during Drosophila wing development.</title>
        <authorList>
            <person name="Klein T."/>
        </authorList>
    </citation>
    <scope>FUNCTION</scope>
    <scope>DEVELOPMENTAL STAGE</scope>
    <scope>DISRUPTION PHENOTYPE</scope>
</reference>
<reference key="5">
    <citation type="journal article" date="2006" name="Curr. Biol.">
        <title>Lethal giant discs, a novel C2-domain protein, restricts notch activation during endocytosis.</title>
        <authorList>
            <person name="Childress J.L."/>
            <person name="Acar M."/>
            <person name="Tao C."/>
            <person name="Halder G."/>
        </authorList>
    </citation>
    <scope>FUNCTION</scope>
    <scope>SUBCELLULAR LOCATION</scope>
    <scope>DEVELOPMENTAL STAGE</scope>
</reference>
<reference key="6">
    <citation type="journal article" date="2006" name="Dev. Cell">
        <title>The conserved c2 domain protein lethal (2) giant discs regulates protein trafficking in Drosophila.</title>
        <authorList>
            <person name="Gallagher C.M."/>
            <person name="Knoblich J.A."/>
        </authorList>
    </citation>
    <scope>FUNCTION</scope>
    <scope>SUBCELLULAR LOCATION</scope>
    <scope>DEVELOPMENTAL STAGE</scope>
    <scope>DOMAIN</scope>
    <scope>MUTAGENESIS OF 1-MET--ASP-580; PRO-557; 595-GLN--ALA-816 AND 665-GLU--ALA-816</scope>
</reference>
<reference key="7">
    <citation type="journal article" date="2006" name="Dev. Cell">
        <title>The Drosophila Notch inhibitor and tumor suppressor gene lethal (2) giant discs encodes a conserved regulator of endosomal trafficking.</title>
        <authorList>
            <person name="Jaekel R."/>
            <person name="Klein T."/>
        </authorList>
    </citation>
    <scope>FUNCTION</scope>
    <scope>SUBCELLULAR LOCATION</scope>
    <scope>DOMAIN</scope>
    <scope>DISRUPTION PHENOTYPE</scope>
</reference>
<reference key="8">
    <citation type="journal article" date="2012" name="J. Cell Sci.">
        <title>The tumour suppressor Lethal (2) giant discs is required for the function of the ESCRT-III component Shrub/CHMP4.</title>
        <authorList>
            <person name="Troost T."/>
            <person name="Jaeckel S."/>
            <person name="Ohlenhard N."/>
            <person name="Klein T."/>
        </authorList>
    </citation>
    <scope>INTERACTION WITH SHRB</scope>
    <scope>SUBCELLULAR LOCATION</scope>
    <scope>DOMAIN</scope>
</reference>
<reference key="9">
    <citation type="journal article" date="2013" name="J. Cell Sci.">
        <title>Activation of Notch in lgd mutant cells requires the fusion of late endosomes with the lysosome.</title>
        <authorList>
            <person name="Schneider M."/>
            <person name="Troost T."/>
            <person name="Grawe F."/>
            <person name="Martinez-Arias A."/>
            <person name="Klein T."/>
        </authorList>
    </citation>
    <scope>FUNCTION</scope>
    <scope>DISRUPTION PHENOTYPE</scope>
</reference>
<reference key="10">
    <citation type="journal article" date="2015" name="Development">
        <title>Lgd regulates the activity of the BMP/Dpp signalling pathway during Drosophila oogenesis.</title>
        <authorList>
            <person name="Morawa K.S."/>
            <person name="Schneider M."/>
            <person name="Klein T."/>
        </authorList>
    </citation>
    <scope>FUNCTION</scope>
    <scope>DISRUPTION PHENOTYPE</scope>
</reference>
<reference key="11">
    <citation type="journal article" date="2015" name="PLoS Genet.">
        <title>Abscission is regulated by the ESCRT-III protein shrub in Drosophila germline stem cells.</title>
        <authorList>
            <person name="Matias N.R."/>
            <person name="Mathieu J."/>
            <person name="Huynh J.R."/>
        </authorList>
    </citation>
    <scope>FUNCTION</scope>
    <scope>DISRUPTION PHENOTYPE</scope>
</reference>
<reference key="12">
    <citation type="journal article" date="2016" name="Cell Rep.">
        <title>Electrostatic Interactions between Elongated Monomers Drive Filamentation of Drosophila Shrub, a Metazoan ESCRT-III Protein.</title>
        <authorList>
            <person name="McMillan B.J."/>
            <person name="Tibbe C."/>
            <person name="Jeon H."/>
            <person name="Drabek A.A."/>
            <person name="Klein T."/>
            <person name="Blacklow S.C."/>
        </authorList>
    </citation>
    <scope>INTERACTION WITH SHRB</scope>
</reference>
<reference key="13">
    <citation type="journal article" date="2020" name="BMC Biol.">
        <title>Lethal (2) giant discs (Lgd)/CC2D1 is required for the full activity of the ESCRT machinery.</title>
        <authorList>
            <person name="Baeumers M."/>
            <person name="Ruhnau K."/>
            <person name="Breuer T."/>
            <person name="Pannen H."/>
            <person name="Goerlich B."/>
            <person name="Kniebel A."/>
            <person name="Haensch S."/>
            <person name="Weidtkamp-Peters S."/>
            <person name="Schmitt L."/>
            <person name="Klein T."/>
        </authorList>
    </citation>
    <scope>FUNCTION</scope>
    <scope>SUBCELLULAR LOCATION</scope>
    <scope>DISRUPTION PHENOTYPE</scope>
</reference>
<reference evidence="20 21" key="14">
    <citation type="journal article" date="2017" name="Cell Rep.">
        <title>Structural Basis for Regulation of ESCRT-III Complexes by Lgd.</title>
        <authorList>
            <person name="McMillan B.J."/>
            <person name="Tibbe C."/>
            <person name="Drabek A.A."/>
            <person name="Seegar T.C.M."/>
            <person name="Blacklow S.C."/>
            <person name="Klein T."/>
        </authorList>
    </citation>
    <scope>X-RAY CRYSTALLOGRAPHY (1.1 ANGSTROMS) OF 359-423 IN COMPLEX WITH SHRB</scope>
    <scope>FUNCTION</scope>
    <scope>INTERACTION WITH SHRB</scope>
    <scope>DOMAIN</scope>
    <scope>MUTAGENESIS OF ARG-173 AND ARG-393</scope>
</reference>
<reference evidence="22" key="15">
    <citation type="journal article" date="2018" name="Dev. Cell">
        <title>CC2D1B Coordinates ESCRT-III Activity during the Mitotic Reformation of the Nuclear Envelope.</title>
        <authorList>
            <person name="Ventimiglia L.N."/>
            <person name="Cuesta-Geijo M.A."/>
            <person name="Martinelli N."/>
            <person name="Caballe A."/>
            <person name="Macheboeuf P."/>
            <person name="Miguet N."/>
            <person name="Parnham I.M."/>
            <person name="Olmos Y."/>
            <person name="Carlton J.G."/>
            <person name="Weissenhorn W."/>
            <person name="Martin-Serrano J."/>
        </authorList>
    </citation>
    <scope>X-RAY CRYSTALLOGRAPHY (2.5 ANGSTROMS) OF 550-816</scope>
</reference>
<sequence length="816" mass="89038">MFSRKKPEPAKRRQHDLSQFGLTEIPDDFDPSAGYGEDDGGDSDLEAELAAITGGEGAKPKPKPKAKLLPASDLDKMIADSLRDVSDDDDDDNLESDPDLLGELSGIGGLEEAEEEEPVAQPPAASEEPVQTFLPTTTVDTLSIIKQRLEMYKQAEANAKTAGDSGKARRFGRGLKTLKDLHRQAAAGKSINVDDIPPEVSVKPIGGQAPPVPAEESPAPSTPASPPPVPSRAAPDPPTPGTPVEPTTSVAPTSPPNPLVTQMRSRQTDYKAAALQSKRSGDISTALQFLKVVKQFDVVIKMCEDGQEVDLSDMPPPPAEFLEFLKKMQEEAAAEAVAEPTAAPEPTPVAPAPVLAAATNMLEALQQRLEKYQSVEAAAKAENNSGKARRFGRIVKQYEDAIKLYKAGKPVPYDELPVPPGFGPLPTADAAPVAPTPSLPTSPTSPPPTASTSAGGTPSSSSATTPTAPRKAPSPPKPKELTTRTSGNQQKNNIAEQQMKLLLERQKEFKLAAIEAKKAGEIDQAKEYLKIFKGFDSLLNAASSGLPVDLSTLPVPPSQRDNLEASFAIVSAEECDPTDDICEIGVRMEEQLAKQLMMCKNTRDHHKAMGDVAGMNRFENLALTVQKDLDLVRYSKRKNEPLPKFHYEKRSFNIVHCNTDLTDSELEIVVVRGISYNVANPKDVDTYVRVEFPLLNDESFKTKTNVIRDTSSPDYDERFKVDIQRTNRQFQRIFKRHGVKFEIYSRGGFLRSDTLIGTVNVKLQPLETKCEIHDTYDLMDGRKQVGGKLEVKIRVRNPILTKQMEHITEKWLVLDA</sequence>
<accession>Q9VKJ9</accession>
<keyword id="KW-0002">3D-structure</keyword>
<keyword id="KW-1003">Cell membrane</keyword>
<keyword id="KW-0175">Coiled coil</keyword>
<keyword id="KW-0963">Cytoplasm</keyword>
<keyword id="KW-0967">Endosome</keyword>
<keyword id="KW-0472">Membrane</keyword>
<keyword id="KW-0914">Notch signaling pathway</keyword>
<keyword id="KW-1185">Reference proteome</keyword>
<comment type="function">
    <text evidence="4 5 6 7 9 10 11 13 14">Phosphatidyl inositol monophosphate binding protein involved in endosomal protein sorting through regulation of the endosomal sorting required for transport (ESCRT) pathway (PubMed:17084357, PubMed:28564595, PubMed:33349255). Required for full activity of the ESCRT-III complex core component shrb/shrub, probably by preventing its inappropriate polymerisation (PubMed:28564595, PubMed:33349255). Required, but not essential, for the efficient generation of intraluminal vesicles (ILVs) in multivesicular bodies (MVBs) (PubMed:33349255). Involved in a late stage of the endosomal pathway targeting transmembrane proteins of the plasma membrane for lysosomal degradation (PubMed:17084357, PubMed:17084358, PubMed:17088062, PubMed:23178945, PubMed:25804739). Plays a critical role in regulation of multiple signal transduction pathways, including the Notch and BMP/decapentaplegic (dpp) signaling pathways, through targeting of membrane bound receptors to multivesicular bodies, isolating them from the cytoplasm and targeting them for lysosomal degradation (PubMed:12648493, PubMed:17084357, PubMed:17084358, PubMed:17088062, PubMed:25804739). Involved in targeting N/Notch for endosomal degradation, negatively regulating the Notch signaling pathway (PubMed:12648493, PubMed:17084357, PubMed:17084358, PubMed:17088062). Regulates Notch signaling in imaginal disk cells and follicle cells during oogenesis and multiple developmental processes, including development of wings, veins, legs, eyes and bristles (PubMed:17084358, PubMed:23178945). Restricts the activity of Notch to the dorsoventral (D/V) boundary of the wing imaginal disk (PubMed:12648493, PubMed:17088062, PubMed:28564595). In external sensory organ development regulates Notch signaling during asymmetric cell division and differentiation of sensory organ precursor cells (PubMed:17084357). May be involved in regulation of apoptosis and cell growth independent of Notch signaling (PubMed:17084358). Involved in targeting tkv for endosomal degradation, negatively regulating the BMP/decapentaplegic (dpp) signaling pathway (PubMed:25804739). Regulates the BMP/dpp signaling pathway in follicle cells during oogenesis, but not in imaginal disk cells during wing development (PubMed:25804739). May be involved in differentiation or morphogenesis of peripodial epithelial cells in the developing imaginal disk (PubMed:23178945). Involved in abscission of germline cells during oogenesis (PubMed:25647097).</text>
</comment>
<comment type="subunit">
    <text evidence="8 12 13">Interacts (via DM14 domains 1 and 3) with shrb; the interaction is direct and blocks access to the surface involved in shrb polymerization (PubMed:22389409, PubMed:27452459, PubMed:28564595). This interaction may be required for the ESCRT-III complex role in multivesicular body formation (PubMed:22389409).</text>
</comment>
<comment type="subcellular location">
    <subcellularLocation>
        <location evidence="6 7">Cytoplasm</location>
    </subcellularLocation>
    <subcellularLocation>
        <location evidence="5 8">Cytoplasm</location>
        <location evidence="5 8">Cytosol</location>
    </subcellularLocation>
    <subcellularLocation>
        <location evidence="5 6">Apicolateral cell membrane</location>
        <topology evidence="5">Peripheral membrane protein</topology>
        <orientation evidence="16">Cytoplasmic side</orientation>
    </subcellularLocation>
    <subcellularLocation>
        <location evidence="5 6">Cytoplasm</location>
        <location evidence="5 6">Cell cortex</location>
    </subcellularLocation>
    <subcellularLocation>
        <location evidence="14">Endosome</location>
    </subcellularLocation>
    <text evidence="5 6 17">Punctate localization in the cell cortex could indicate vesicle association (Probable). Apico-lateral membrane concentration in polarized epithelial and imaginal disk cells but not in asymmetrically dividing neuroblasts (PubMed:17084357, PubMed:17084358).</text>
</comment>
<comment type="developmental stage">
    <text evidence="4 5 7">Expressed in embryo cells, including epithelial and neuroblast cells, but not in larval or pupal cells (at protein level) (PubMed:17084357). Expressed in wing and eye imaginal disks (PubMed:12648493, PubMed:17088062).</text>
</comment>
<comment type="domain">
    <text evidence="5 8 18">The C2 domain mediates interaction with monophosphorylated phosphatidylinositols PtdIns[3]P, PtdIns[4]P and PtdIns[5]P, and is required for membrane interaction (PubMed:17084357). C2 domains can mediate membrane interactions in a Ca(2+)-dependent or -independent manner; the l(2)gd1 C2 domain lacks three out of five asparagines that are crucial for Ca(2+) binding (Probable). The C2 domain is required for protein stability and cytoplasmic localization, and is essential for l(2)gd1 function (PubMed:22389409).</text>
</comment>
<comment type="domain">
    <text evidence="8 13">Contains 4 tandem repeats of the DM14 domain that mediate interaction with the ESCRT-III complex component shrb (PubMed:22389409, PubMed:28564595). The 4 DM14 domains show functional redundancy, particularly domains 1 and 3, however domain 3 is necessary and sufficient for l(2)gd1 function (PubMed:22389409, PubMed:28564595). DM14 domain 3 forms an alpha-helical hairpin loop with a positively charged surface patch that binds a negatively charged surface patch on shrb (PubMed:28564595).</text>
</comment>
<comment type="disruption phenotype">
    <text evidence="4 6 9 10 11 14">Results in abnormal vein, eye, and bristle development probably due to defective regulation of the Notch signaling pathway, particularly in imaginal disk cells (PubMed:12648493, PubMed:17084358, PubMed:33349255). Accumulation of proteins in enlarged late endosomes, including N/Notch, possibly contributing to ligand-independent ectopic activation of the Notch signaling pathway (PubMed:17084358). Failure or delay of abscission during germline stem-cell division resulting in multi-cell cysts that share a cytoplasm (PubMed:25647097). During oogenesis a fraction of cysts undergo an additional round of germline cell division resulting in egg chambers with 32 germline cells instead of 16, possibly due to ectopic activation of the BMP/decapentaplegic (dpp) signaling pathway (PubMed:25647097, PubMed:25804739). Conditional RNAi-mediated knock-down in the wing imaginal disk results in peripodial epithelial cells adopting a columnar instead of cuboidal morphology (PubMed:23178945).</text>
</comment>
<comment type="similarity">
    <text evidence="16">Belongs to the CC2D1 family.</text>
</comment>